<evidence type="ECO:0000250" key="1">
    <source>
        <dbReference type="UniProtKB" id="Q9JMB0"/>
    </source>
</evidence>
<evidence type="ECO:0000255" key="2"/>
<evidence type="ECO:0000256" key="3">
    <source>
        <dbReference type="SAM" id="MobiDB-lite"/>
    </source>
</evidence>
<evidence type="ECO:0000305" key="4"/>
<gene>
    <name type="primary">gkap1-a</name>
</gene>
<dbReference type="EMBL" id="BC073450">
    <property type="protein sequence ID" value="AAH73450.1"/>
    <property type="molecule type" value="mRNA"/>
</dbReference>
<dbReference type="RefSeq" id="NP_001085868.1">
    <property type="nucleotide sequence ID" value="NM_001092399.1"/>
</dbReference>
<dbReference type="RefSeq" id="XP_018097784.1">
    <property type="nucleotide sequence ID" value="XM_018242295.1"/>
</dbReference>
<dbReference type="SMR" id="Q6GNQ4"/>
<dbReference type="BioGRID" id="102458">
    <property type="interactions" value="1"/>
</dbReference>
<dbReference type="IntAct" id="Q6GNQ4">
    <property type="interactions" value="1"/>
</dbReference>
<dbReference type="DNASU" id="444295"/>
<dbReference type="GeneID" id="444295"/>
<dbReference type="KEGG" id="xla:444295"/>
<dbReference type="AGR" id="Xenbase:XB-GENE-1002576"/>
<dbReference type="CTD" id="444295"/>
<dbReference type="Xenbase" id="XB-GENE-1002576">
    <property type="gene designation" value="gkap1.L"/>
</dbReference>
<dbReference type="OrthoDB" id="5864420at2759"/>
<dbReference type="Proteomes" id="UP000186698">
    <property type="component" value="Chromosome 1L"/>
</dbReference>
<dbReference type="Bgee" id="444295">
    <property type="expression patterns" value="Expressed in gastrula and 19 other cell types or tissues"/>
</dbReference>
<dbReference type="GO" id="GO:0005794">
    <property type="term" value="C:Golgi apparatus"/>
    <property type="evidence" value="ECO:0007669"/>
    <property type="project" value="UniProtKB-SubCell"/>
</dbReference>
<dbReference type="GO" id="GO:0007165">
    <property type="term" value="P:signal transduction"/>
    <property type="evidence" value="ECO:0000318"/>
    <property type="project" value="GO_Central"/>
</dbReference>
<dbReference type="InterPro" id="IPR026109">
    <property type="entry name" value="GKAP1"/>
</dbReference>
<dbReference type="PANTHER" id="PTHR14899">
    <property type="entry name" value="G KINASE ANCHORING PROTEIN 1"/>
    <property type="match status" value="1"/>
</dbReference>
<dbReference type="PANTHER" id="PTHR14899:SF0">
    <property type="entry name" value="G KINASE-ANCHORING PROTEIN 1"/>
    <property type="match status" value="1"/>
</dbReference>
<dbReference type="PRINTS" id="PR02083">
    <property type="entry name" value="GKINASEAP1"/>
</dbReference>
<organism>
    <name type="scientific">Xenopus laevis</name>
    <name type="common">African clawed frog</name>
    <dbReference type="NCBI Taxonomy" id="8355"/>
    <lineage>
        <taxon>Eukaryota</taxon>
        <taxon>Metazoa</taxon>
        <taxon>Chordata</taxon>
        <taxon>Craniata</taxon>
        <taxon>Vertebrata</taxon>
        <taxon>Euteleostomi</taxon>
        <taxon>Amphibia</taxon>
        <taxon>Batrachia</taxon>
        <taxon>Anura</taxon>
        <taxon>Pipoidea</taxon>
        <taxon>Pipidae</taxon>
        <taxon>Xenopodinae</taxon>
        <taxon>Xenopus</taxon>
        <taxon>Xenopus</taxon>
    </lineage>
</organism>
<sequence>MASAVVSMVPTTASRFALLQVDSSSDSDSEKARGAHSSGKAHSGSAARGKNKGNEKKKEKRRKKKEQQQSEANELRNLAFKKIPPKASPGVAVQEHLTHTVPKVAQEEDWQQWQQRDVQLTSDMYEADLEKALILSKLEFEESKDNGNGDNGVPQSKKVNKKDKRKNNQGKDKPLTVPLKDFQLEDKHAKKQEELKSPPLPQDSGFFNKLEEDVTKIILKEKRKEHSTDVTEQFATPEYSMEPVLKDGRTEVLKQEIEKKEVELKQMKSIISQWEAKYREVKARNSQLLKMLQEGEMKDKAEILLQVDELLSIKNELTLQVTTLHAALEQERSKVKILQAEQVKYQGGKKSKRTAELEHGR</sequence>
<proteinExistence type="evidence at transcript level"/>
<reference key="1">
    <citation type="submission" date="2004-06" db="EMBL/GenBank/DDBJ databases">
        <authorList>
            <consortium name="NIH - Xenopus Gene Collection (XGC) project"/>
        </authorList>
    </citation>
    <scope>NUCLEOTIDE SEQUENCE [LARGE SCALE MRNA]</scope>
    <source>
        <tissue>Embryo</tissue>
    </source>
</reference>
<accession>Q6GNQ4</accession>
<keyword id="KW-0175">Coiled coil</keyword>
<keyword id="KW-0333">Golgi apparatus</keyword>
<keyword id="KW-1185">Reference proteome</keyword>
<protein>
    <recommendedName>
        <fullName>G kinase-anchoring protein 1-A</fullName>
    </recommendedName>
</protein>
<comment type="function">
    <text evidence="1">May play a role in the regulation of insulin-dependent IRS1 tyrosine phosphorylation in adipocytes.</text>
</comment>
<comment type="subcellular location">
    <subcellularLocation>
        <location evidence="1">Golgi apparatus</location>
    </subcellularLocation>
</comment>
<comment type="similarity">
    <text evidence="4">Belongs to the GKAP1 family.</text>
</comment>
<name>GKP1A_XENLA</name>
<feature type="chain" id="PRO_0000315658" description="G kinase-anchoring protein 1-A">
    <location>
        <begin position="1"/>
        <end position="361"/>
    </location>
</feature>
<feature type="region of interest" description="Disordered" evidence="3">
    <location>
        <begin position="22"/>
        <end position="111"/>
    </location>
</feature>
<feature type="region of interest" description="Disordered" evidence="3">
    <location>
        <begin position="140"/>
        <end position="183"/>
    </location>
</feature>
<feature type="coiled-coil region" evidence="2">
    <location>
        <begin position="51"/>
        <end position="79"/>
    </location>
</feature>
<feature type="coiled-coil region" evidence="2">
    <location>
        <begin position="246"/>
        <end position="296"/>
    </location>
</feature>
<feature type="coiled-coil region" evidence="2">
    <location>
        <begin position="326"/>
        <end position="346"/>
    </location>
</feature>
<feature type="compositionally biased region" description="Low complexity" evidence="3">
    <location>
        <begin position="35"/>
        <end position="48"/>
    </location>
</feature>
<feature type="compositionally biased region" description="Basic residues" evidence="3">
    <location>
        <begin position="158"/>
        <end position="168"/>
    </location>
</feature>